<protein>
    <recommendedName>
        <fullName evidence="1">Small ribosomal subunit protein uS3</fullName>
    </recommendedName>
    <alternativeName>
        <fullName evidence="2">30S ribosomal protein S3</fullName>
    </alternativeName>
</protein>
<dbReference type="EMBL" id="AE017180">
    <property type="protein sequence ID" value="AAR36244.1"/>
    <property type="molecule type" value="Genomic_DNA"/>
</dbReference>
<dbReference type="RefSeq" id="NP_953894.1">
    <property type="nucleotide sequence ID" value="NC_002939.5"/>
</dbReference>
<dbReference type="RefSeq" id="WP_010943480.1">
    <property type="nucleotide sequence ID" value="NC_002939.5"/>
</dbReference>
<dbReference type="SMR" id="Q748Z4"/>
<dbReference type="FunCoup" id="Q748Z4">
    <property type="interactions" value="745"/>
</dbReference>
<dbReference type="STRING" id="243231.GSU2851"/>
<dbReference type="EnsemblBacteria" id="AAR36244">
    <property type="protein sequence ID" value="AAR36244"/>
    <property type="gene ID" value="GSU2851"/>
</dbReference>
<dbReference type="KEGG" id="gsu:GSU2851"/>
<dbReference type="PATRIC" id="fig|243231.5.peg.2877"/>
<dbReference type="eggNOG" id="COG0092">
    <property type="taxonomic scope" value="Bacteria"/>
</dbReference>
<dbReference type="HOGENOM" id="CLU_058591_0_2_7"/>
<dbReference type="InParanoid" id="Q748Z4"/>
<dbReference type="OrthoDB" id="9806396at2"/>
<dbReference type="Proteomes" id="UP000000577">
    <property type="component" value="Chromosome"/>
</dbReference>
<dbReference type="GO" id="GO:0022627">
    <property type="term" value="C:cytosolic small ribosomal subunit"/>
    <property type="evidence" value="ECO:0000318"/>
    <property type="project" value="GO_Central"/>
</dbReference>
<dbReference type="GO" id="GO:0003729">
    <property type="term" value="F:mRNA binding"/>
    <property type="evidence" value="ECO:0007669"/>
    <property type="project" value="UniProtKB-UniRule"/>
</dbReference>
<dbReference type="GO" id="GO:0019843">
    <property type="term" value="F:rRNA binding"/>
    <property type="evidence" value="ECO:0007669"/>
    <property type="project" value="UniProtKB-UniRule"/>
</dbReference>
<dbReference type="GO" id="GO:0003735">
    <property type="term" value="F:structural constituent of ribosome"/>
    <property type="evidence" value="ECO:0000318"/>
    <property type="project" value="GO_Central"/>
</dbReference>
<dbReference type="GO" id="GO:0006412">
    <property type="term" value="P:translation"/>
    <property type="evidence" value="ECO:0007669"/>
    <property type="project" value="UniProtKB-UniRule"/>
</dbReference>
<dbReference type="CDD" id="cd02412">
    <property type="entry name" value="KH-II_30S_S3"/>
    <property type="match status" value="1"/>
</dbReference>
<dbReference type="FunFam" id="3.30.1140.32:FF:000009">
    <property type="entry name" value="30S ribosomal protein S3"/>
    <property type="match status" value="1"/>
</dbReference>
<dbReference type="FunFam" id="3.30.300.20:FF:000001">
    <property type="entry name" value="30S ribosomal protein S3"/>
    <property type="match status" value="1"/>
</dbReference>
<dbReference type="Gene3D" id="3.30.300.20">
    <property type="match status" value="1"/>
</dbReference>
<dbReference type="Gene3D" id="3.30.1140.32">
    <property type="entry name" value="Ribosomal protein S3, C-terminal domain"/>
    <property type="match status" value="1"/>
</dbReference>
<dbReference type="HAMAP" id="MF_01309_B">
    <property type="entry name" value="Ribosomal_uS3_B"/>
    <property type="match status" value="1"/>
</dbReference>
<dbReference type="InterPro" id="IPR004087">
    <property type="entry name" value="KH_dom"/>
</dbReference>
<dbReference type="InterPro" id="IPR015946">
    <property type="entry name" value="KH_dom-like_a/b"/>
</dbReference>
<dbReference type="InterPro" id="IPR004044">
    <property type="entry name" value="KH_dom_type_2"/>
</dbReference>
<dbReference type="InterPro" id="IPR009019">
    <property type="entry name" value="KH_sf_prok-type"/>
</dbReference>
<dbReference type="InterPro" id="IPR036419">
    <property type="entry name" value="Ribosomal_S3_C_sf"/>
</dbReference>
<dbReference type="InterPro" id="IPR005704">
    <property type="entry name" value="Ribosomal_uS3_bac-typ"/>
</dbReference>
<dbReference type="InterPro" id="IPR001351">
    <property type="entry name" value="Ribosomal_uS3_C"/>
</dbReference>
<dbReference type="InterPro" id="IPR018280">
    <property type="entry name" value="Ribosomal_uS3_CS"/>
</dbReference>
<dbReference type="NCBIfam" id="TIGR01009">
    <property type="entry name" value="rpsC_bact"/>
    <property type="match status" value="1"/>
</dbReference>
<dbReference type="PANTHER" id="PTHR11760">
    <property type="entry name" value="30S/40S RIBOSOMAL PROTEIN S3"/>
    <property type="match status" value="1"/>
</dbReference>
<dbReference type="PANTHER" id="PTHR11760:SF19">
    <property type="entry name" value="SMALL RIBOSOMAL SUBUNIT PROTEIN US3C"/>
    <property type="match status" value="1"/>
</dbReference>
<dbReference type="Pfam" id="PF07650">
    <property type="entry name" value="KH_2"/>
    <property type="match status" value="1"/>
</dbReference>
<dbReference type="Pfam" id="PF00189">
    <property type="entry name" value="Ribosomal_S3_C"/>
    <property type="match status" value="1"/>
</dbReference>
<dbReference type="SMART" id="SM00322">
    <property type="entry name" value="KH"/>
    <property type="match status" value="1"/>
</dbReference>
<dbReference type="SUPFAM" id="SSF54814">
    <property type="entry name" value="Prokaryotic type KH domain (KH-domain type II)"/>
    <property type="match status" value="1"/>
</dbReference>
<dbReference type="SUPFAM" id="SSF54821">
    <property type="entry name" value="Ribosomal protein S3 C-terminal domain"/>
    <property type="match status" value="1"/>
</dbReference>
<dbReference type="PROSITE" id="PS50823">
    <property type="entry name" value="KH_TYPE_2"/>
    <property type="match status" value="1"/>
</dbReference>
<dbReference type="PROSITE" id="PS00548">
    <property type="entry name" value="RIBOSOMAL_S3"/>
    <property type="match status" value="1"/>
</dbReference>
<keyword id="KW-1185">Reference proteome</keyword>
<keyword id="KW-0687">Ribonucleoprotein</keyword>
<keyword id="KW-0689">Ribosomal protein</keyword>
<keyword id="KW-0694">RNA-binding</keyword>
<keyword id="KW-0699">rRNA-binding</keyword>
<sequence>MGQKVNPVGFRLGVIRTWDSRWYAEADYSKLLHEDLKLRNFLKKRLYNSGVSKIEIERAANKAKINIYTARPGLIIGKKGAEVETLKKELAKLTDKEIYLNIQEVRKPELDAQLVAENVALQLERRVAFRRAMKKSVTSSLKFGAKGIRITCSGRLGGAEMSRTEWYREGRVPLHTLRADIDYGFAEAKTTYGIIGVKVLIFKGEVLPGQK</sequence>
<gene>
    <name evidence="1" type="primary">rpsC</name>
    <name type="ordered locus">GSU2851</name>
</gene>
<proteinExistence type="inferred from homology"/>
<reference key="1">
    <citation type="journal article" date="2003" name="Science">
        <title>Genome of Geobacter sulfurreducens: metal reduction in subsurface environments.</title>
        <authorList>
            <person name="Methe B.A."/>
            <person name="Nelson K.E."/>
            <person name="Eisen J.A."/>
            <person name="Paulsen I.T."/>
            <person name="Nelson W.C."/>
            <person name="Heidelberg J.F."/>
            <person name="Wu D."/>
            <person name="Wu M."/>
            <person name="Ward N.L."/>
            <person name="Beanan M.J."/>
            <person name="Dodson R.J."/>
            <person name="Madupu R."/>
            <person name="Brinkac L.M."/>
            <person name="Daugherty S.C."/>
            <person name="DeBoy R.T."/>
            <person name="Durkin A.S."/>
            <person name="Gwinn M.L."/>
            <person name="Kolonay J.F."/>
            <person name="Sullivan S.A."/>
            <person name="Haft D.H."/>
            <person name="Selengut J."/>
            <person name="Davidsen T.M."/>
            <person name="Zafar N."/>
            <person name="White O."/>
            <person name="Tran B."/>
            <person name="Romero C."/>
            <person name="Forberger H.A."/>
            <person name="Weidman J.F."/>
            <person name="Khouri H.M."/>
            <person name="Feldblyum T.V."/>
            <person name="Utterback T.R."/>
            <person name="Van Aken S.E."/>
            <person name="Lovley D.R."/>
            <person name="Fraser C.M."/>
        </authorList>
    </citation>
    <scope>NUCLEOTIDE SEQUENCE [LARGE SCALE GENOMIC DNA]</scope>
    <source>
        <strain>ATCC 51573 / DSM 12127 / PCA</strain>
    </source>
</reference>
<feature type="chain" id="PRO_0000130124" description="Small ribosomal subunit protein uS3">
    <location>
        <begin position="1"/>
        <end position="211"/>
    </location>
</feature>
<feature type="domain" description="KH type-2" evidence="1">
    <location>
        <begin position="38"/>
        <end position="106"/>
    </location>
</feature>
<comment type="function">
    <text evidence="1">Binds the lower part of the 30S subunit head. Binds mRNA in the 70S ribosome, positioning it for translation.</text>
</comment>
<comment type="subunit">
    <text evidence="1">Part of the 30S ribosomal subunit. Forms a tight complex with proteins S10 and S14.</text>
</comment>
<comment type="similarity">
    <text evidence="1">Belongs to the universal ribosomal protein uS3 family.</text>
</comment>
<name>RS3_GEOSL</name>
<evidence type="ECO:0000255" key="1">
    <source>
        <dbReference type="HAMAP-Rule" id="MF_01309"/>
    </source>
</evidence>
<evidence type="ECO:0000305" key="2"/>
<accession>Q748Z4</accession>
<organism>
    <name type="scientific">Geobacter sulfurreducens (strain ATCC 51573 / DSM 12127 / PCA)</name>
    <dbReference type="NCBI Taxonomy" id="243231"/>
    <lineage>
        <taxon>Bacteria</taxon>
        <taxon>Pseudomonadati</taxon>
        <taxon>Thermodesulfobacteriota</taxon>
        <taxon>Desulfuromonadia</taxon>
        <taxon>Geobacterales</taxon>
        <taxon>Geobacteraceae</taxon>
        <taxon>Geobacter</taxon>
    </lineage>
</organism>